<feature type="chain" id="PRO_0000166001" description="Uricase-2 isozyme 2">
    <location>
        <begin position="1"/>
        <end position="301"/>
    </location>
</feature>
<feature type="short sequence motif" description="Microbody targeting signal" evidence="4">
    <location>
        <begin position="299"/>
        <end position="301"/>
    </location>
</feature>
<feature type="active site" description="Charge relay system" evidence="2">
    <location>
        <position position="17"/>
    </location>
</feature>
<feature type="active site" description="Charge relay system" evidence="2">
    <location>
        <position position="63"/>
    </location>
</feature>
<feature type="active site" description="Charge relay system" evidence="2">
    <location>
        <position position="259"/>
    </location>
</feature>
<feature type="binding site" evidence="3">
    <location>
        <position position="63"/>
    </location>
    <ligand>
        <name>urate</name>
        <dbReference type="ChEBI" id="CHEBI:17775"/>
    </ligand>
</feature>
<feature type="binding site" evidence="3">
    <location>
        <position position="64"/>
    </location>
    <ligand>
        <name>urate</name>
        <dbReference type="ChEBI" id="CHEBI:17775"/>
    </ligand>
</feature>
<feature type="binding site" evidence="3">
    <location>
        <position position="165"/>
    </location>
    <ligand>
        <name>urate</name>
        <dbReference type="ChEBI" id="CHEBI:17775"/>
    </ligand>
</feature>
<feature type="binding site" evidence="3">
    <location>
        <position position="182"/>
    </location>
    <ligand>
        <name>urate</name>
        <dbReference type="ChEBI" id="CHEBI:17775"/>
    </ligand>
</feature>
<feature type="binding site" evidence="3">
    <location>
        <position position="237"/>
    </location>
    <ligand>
        <name>urate</name>
        <dbReference type="ChEBI" id="CHEBI:17775"/>
    </ligand>
</feature>
<feature type="binding site" evidence="3">
    <location>
        <position position="238"/>
    </location>
    <ligand>
        <name>urate</name>
        <dbReference type="ChEBI" id="CHEBI:17775"/>
    </ligand>
</feature>
<feature type="binding site" evidence="3">
    <location>
        <position position="257"/>
    </location>
    <ligand>
        <name>urate</name>
        <dbReference type="ChEBI" id="CHEBI:17775"/>
    </ligand>
</feature>
<dbReference type="EC" id="1.7.3.3"/>
<dbReference type="EMBL" id="X76287">
    <property type="protein sequence ID" value="CAA53905.1"/>
    <property type="molecule type" value="mRNA"/>
</dbReference>
<dbReference type="PIR" id="S38910">
    <property type="entry name" value="S38910"/>
</dbReference>
<dbReference type="SMR" id="P34799"/>
<dbReference type="UniPathway" id="UPA00394">
    <property type="reaction ID" value="UER00650"/>
</dbReference>
<dbReference type="GO" id="GO:0005777">
    <property type="term" value="C:peroxisome"/>
    <property type="evidence" value="ECO:0007669"/>
    <property type="project" value="UniProtKB-SubCell"/>
</dbReference>
<dbReference type="GO" id="GO:0004846">
    <property type="term" value="F:urate oxidase activity"/>
    <property type="evidence" value="ECO:0007669"/>
    <property type="project" value="UniProtKB-EC"/>
</dbReference>
<dbReference type="GO" id="GO:0009877">
    <property type="term" value="P:nodulation"/>
    <property type="evidence" value="ECO:0007669"/>
    <property type="project" value="UniProtKB-KW"/>
</dbReference>
<dbReference type="GO" id="GO:0006145">
    <property type="term" value="P:purine nucleobase catabolic process"/>
    <property type="evidence" value="ECO:0007669"/>
    <property type="project" value="TreeGrafter"/>
</dbReference>
<dbReference type="GO" id="GO:0019628">
    <property type="term" value="P:urate catabolic process"/>
    <property type="evidence" value="ECO:0007669"/>
    <property type="project" value="UniProtKB-UniPathway"/>
</dbReference>
<dbReference type="CDD" id="cd00445">
    <property type="entry name" value="Uricase"/>
    <property type="match status" value="1"/>
</dbReference>
<dbReference type="FunFam" id="3.10.270.10:FF:000001">
    <property type="entry name" value="Uricase"/>
    <property type="match status" value="1"/>
</dbReference>
<dbReference type="Gene3D" id="3.10.270.10">
    <property type="entry name" value="Urate Oxidase"/>
    <property type="match status" value="1"/>
</dbReference>
<dbReference type="InterPro" id="IPR002042">
    <property type="entry name" value="Uricase"/>
</dbReference>
<dbReference type="InterPro" id="IPR019842">
    <property type="entry name" value="Uricase_CS"/>
</dbReference>
<dbReference type="NCBIfam" id="TIGR03383">
    <property type="entry name" value="urate_oxi"/>
    <property type="match status" value="1"/>
</dbReference>
<dbReference type="PANTHER" id="PTHR42874">
    <property type="entry name" value="URICASE"/>
    <property type="match status" value="1"/>
</dbReference>
<dbReference type="PANTHER" id="PTHR42874:SF1">
    <property type="entry name" value="URICASE"/>
    <property type="match status" value="1"/>
</dbReference>
<dbReference type="Pfam" id="PF01014">
    <property type="entry name" value="Uricase"/>
    <property type="match status" value="2"/>
</dbReference>
<dbReference type="PIRSF" id="PIRSF000241">
    <property type="entry name" value="Urate_oxidase"/>
    <property type="match status" value="1"/>
</dbReference>
<dbReference type="PRINTS" id="PR00093">
    <property type="entry name" value="URICASE"/>
</dbReference>
<dbReference type="SUPFAM" id="SSF55620">
    <property type="entry name" value="Tetrahydrobiopterin biosynthesis enzymes-like"/>
    <property type="match status" value="2"/>
</dbReference>
<dbReference type="PROSITE" id="PS00366">
    <property type="entry name" value="URICASE"/>
    <property type="match status" value="1"/>
</dbReference>
<accession>P34799</accession>
<reference key="1">
    <citation type="journal article" date="1993" name="Singmul Hakhoe Chi">
        <title>Nucleotide sequence and expression of cDNA clones encoding uricase II in Canavalia lineata.</title>
        <authorList>
            <person name="Bang K.H."/>
            <person name="An C.S."/>
        </authorList>
    </citation>
    <scope>NUCLEOTIDE SEQUENCE [MRNA]</scope>
    <source>
        <tissue>Root nodule</tissue>
    </source>
</reference>
<organism>
    <name type="scientific">Canavalia lineata</name>
    <name type="common">Beach bean</name>
    <name type="synonym">Dolichos lineatus</name>
    <dbReference type="NCBI Taxonomy" id="28957"/>
    <lineage>
        <taxon>Eukaryota</taxon>
        <taxon>Viridiplantae</taxon>
        <taxon>Streptophyta</taxon>
        <taxon>Embryophyta</taxon>
        <taxon>Tracheophyta</taxon>
        <taxon>Spermatophyta</taxon>
        <taxon>Magnoliopsida</taxon>
        <taxon>eudicotyledons</taxon>
        <taxon>Gunneridae</taxon>
        <taxon>Pentapetalae</taxon>
        <taxon>rosids</taxon>
        <taxon>fabids</taxon>
        <taxon>Fabales</taxon>
        <taxon>Fabaceae</taxon>
        <taxon>Papilionoideae</taxon>
        <taxon>50 kb inversion clade</taxon>
        <taxon>NPAAA clade</taxon>
        <taxon>indigoferoid/millettioid clade</taxon>
        <taxon>Phaseoleae</taxon>
        <taxon>Canavalia</taxon>
    </lineage>
</organism>
<proteinExistence type="evidence at transcript level"/>
<comment type="function">
    <text evidence="1">Catalyzes the oxidation of uric acid to 5-hydroxyisourate, which is further processed to form (S)-allantoin.</text>
</comment>
<comment type="catalytic activity">
    <reaction>
        <text>urate + O2 + H2O = 5-hydroxyisourate + H2O2</text>
        <dbReference type="Rhea" id="RHEA:21368"/>
        <dbReference type="ChEBI" id="CHEBI:15377"/>
        <dbReference type="ChEBI" id="CHEBI:15379"/>
        <dbReference type="ChEBI" id="CHEBI:16240"/>
        <dbReference type="ChEBI" id="CHEBI:17775"/>
        <dbReference type="ChEBI" id="CHEBI:18072"/>
        <dbReference type="EC" id="1.7.3.3"/>
    </reaction>
</comment>
<comment type="pathway">
    <text>Purine metabolism; urate degradation; (S)-allantoin from urate: step 1/3.</text>
</comment>
<comment type="subcellular location">
    <subcellularLocation>
        <location evidence="1">Peroxisome</location>
    </subcellularLocation>
</comment>
<comment type="similarity">
    <text evidence="5">Belongs to the uricase family.</text>
</comment>
<evidence type="ECO:0000250" key="1"/>
<evidence type="ECO:0000250" key="2">
    <source>
        <dbReference type="UniProtKB" id="D0VWQ1"/>
    </source>
</evidence>
<evidence type="ECO:0000250" key="3">
    <source>
        <dbReference type="UniProtKB" id="Q00511"/>
    </source>
</evidence>
<evidence type="ECO:0000255" key="4"/>
<evidence type="ECO:0000305" key="5"/>
<sequence>MAKEIVGGFKFDQRHGKERVRVARVWKTKKGGYFIVEWRVGISLLSDCVNSYVRDDNSDIVATDTMKNTVYAKAKECSEILSVEDFAILLAKHFISFYKQVTAAIVNIVEKPWERVSVDGQPHEHGFKLGSERHTAEAIVQKSGALQLTSGIEGLSLLKTTKSGFEGFIRDKYTALPETHERMLATEVTALWRYSYESLYSIPQKPLYFTDKYLEVKKVLADTFFGPPNVGVYSPSVQNTLYLMAKAHSSIQLKMPNIHFLPVNISNKDGPIVKFDDDVYFPTDEPHGSIQASLSRLWSKL</sequence>
<name>URIC2_CANLI</name>
<protein>
    <recommendedName>
        <fullName>Uricase-2 isozyme 2</fullName>
        <ecNumber>1.7.3.3</ecNumber>
    </recommendedName>
    <alternativeName>
        <fullName>Urate oxidase</fullName>
    </alternativeName>
    <alternativeName>
        <fullName>Uricase II clone pcClNUO-02</fullName>
    </alternativeName>
</protein>
<keyword id="KW-0536">Nodulation</keyword>
<keyword id="KW-0560">Oxidoreductase</keyword>
<keyword id="KW-0576">Peroxisome</keyword>
<keyword id="KW-0659">Purine metabolism</keyword>